<dbReference type="EMBL" id="AK017808">
    <property type="protein sequence ID" value="BAB30945.1"/>
    <property type="molecule type" value="mRNA"/>
</dbReference>
<dbReference type="EMBL" id="AK079384">
    <property type="protein sequence ID" value="BAC37628.1"/>
    <property type="molecule type" value="mRNA"/>
</dbReference>
<dbReference type="EMBL" id="BC018493">
    <property type="protein sequence ID" value="AAH18493.1"/>
    <property type="molecule type" value="mRNA"/>
</dbReference>
<dbReference type="CCDS" id="CCDS17421.1"/>
<dbReference type="RefSeq" id="NP_001366471.1">
    <property type="nucleotide sequence ID" value="NM_001379542.1"/>
</dbReference>
<dbReference type="RefSeq" id="NP_001366472.1">
    <property type="nucleotide sequence ID" value="NM_001379543.1"/>
</dbReference>
<dbReference type="RefSeq" id="NP_081771.2">
    <property type="nucleotide sequence ID" value="NM_027495.4"/>
</dbReference>
<dbReference type="RefSeq" id="XP_006502120.1">
    <property type="nucleotide sequence ID" value="XM_006502057.3"/>
</dbReference>
<dbReference type="RefSeq" id="XP_006502121.1">
    <property type="nucleotide sequence ID" value="XM_006502058.5"/>
</dbReference>
<dbReference type="RefSeq" id="XP_006502122.1">
    <property type="nucleotide sequence ID" value="XM_006502059.5"/>
</dbReference>
<dbReference type="RefSeq" id="XP_011238526.1">
    <property type="nucleotide sequence ID" value="XM_011240224.2"/>
</dbReference>
<dbReference type="RefSeq" id="XP_036019198.1">
    <property type="nucleotide sequence ID" value="XM_036163305.1"/>
</dbReference>
<dbReference type="RefSeq" id="XP_036019199.1">
    <property type="nucleotide sequence ID" value="XM_036163306.1"/>
</dbReference>
<dbReference type="FunCoup" id="Q8VEH0">
    <property type="interactions" value="4"/>
</dbReference>
<dbReference type="STRING" id="10090.ENSMUSP00000029568"/>
<dbReference type="iPTMnet" id="Q8VEH0"/>
<dbReference type="PhosphoSitePlus" id="Q8VEH0"/>
<dbReference type="PaxDb" id="10090-ENSMUSP00000029568"/>
<dbReference type="ProteomicsDB" id="259533"/>
<dbReference type="Antibodypedia" id="28144">
    <property type="antibodies" value="32 antibodies from 13 providers"/>
</dbReference>
<dbReference type="DNASU" id="70652"/>
<dbReference type="Ensembl" id="ENSMUST00000029568.7">
    <property type="protein sequence ID" value="ENSMUSP00000029568.2"/>
    <property type="gene ID" value="ENSMUSG00000027956.12"/>
</dbReference>
<dbReference type="Ensembl" id="ENSMUST00000168038.8">
    <property type="protein sequence ID" value="ENSMUSP00000127837.2"/>
    <property type="gene ID" value="ENSMUSG00000027956.12"/>
</dbReference>
<dbReference type="GeneID" id="70652"/>
<dbReference type="KEGG" id="mmu:70652"/>
<dbReference type="UCSC" id="uc008pnw.1">
    <property type="organism name" value="mouse"/>
</dbReference>
<dbReference type="AGR" id="MGI:1917902"/>
<dbReference type="CTD" id="55314"/>
<dbReference type="MGI" id="MGI:1917902">
    <property type="gene designation" value="Tmem144"/>
</dbReference>
<dbReference type="VEuPathDB" id="HostDB:ENSMUSG00000027956"/>
<dbReference type="eggNOG" id="ENOG502QR0F">
    <property type="taxonomic scope" value="Eukaryota"/>
</dbReference>
<dbReference type="GeneTree" id="ENSGT00390000012574"/>
<dbReference type="HOGENOM" id="CLU_031844_1_0_1"/>
<dbReference type="InParanoid" id="Q8VEH0"/>
<dbReference type="OMA" id="FCHFSGI"/>
<dbReference type="OrthoDB" id="426527at2759"/>
<dbReference type="PhylomeDB" id="Q8VEH0"/>
<dbReference type="TreeFam" id="TF313673"/>
<dbReference type="BioGRID-ORCS" id="70652">
    <property type="hits" value="1 hit in 76 CRISPR screens"/>
</dbReference>
<dbReference type="ChiTaRS" id="Tmem144">
    <property type="organism name" value="mouse"/>
</dbReference>
<dbReference type="PRO" id="PR:Q8VEH0"/>
<dbReference type="Proteomes" id="UP000000589">
    <property type="component" value="Chromosome 3"/>
</dbReference>
<dbReference type="RNAct" id="Q8VEH0">
    <property type="molecule type" value="protein"/>
</dbReference>
<dbReference type="Bgee" id="ENSMUSG00000027956">
    <property type="expression patterns" value="Expressed in spermatid and 149 other cell types or tissues"/>
</dbReference>
<dbReference type="ExpressionAtlas" id="Q8VEH0">
    <property type="expression patterns" value="baseline and differential"/>
</dbReference>
<dbReference type="GO" id="GO:0016020">
    <property type="term" value="C:membrane"/>
    <property type="evidence" value="ECO:0007669"/>
    <property type="project" value="UniProtKB-SubCell"/>
</dbReference>
<dbReference type="GO" id="GO:0015144">
    <property type="term" value="F:carbohydrate transmembrane transporter activity"/>
    <property type="evidence" value="ECO:0007669"/>
    <property type="project" value="InterPro"/>
</dbReference>
<dbReference type="InterPro" id="IPR010651">
    <property type="entry name" value="Sugar_transport"/>
</dbReference>
<dbReference type="InterPro" id="IPR012435">
    <property type="entry name" value="TMEM144"/>
</dbReference>
<dbReference type="PANTHER" id="PTHR16119">
    <property type="entry name" value="TRANSMEMBRANE PROTEIN 144"/>
    <property type="match status" value="1"/>
</dbReference>
<dbReference type="PANTHER" id="PTHR16119:SF17">
    <property type="entry name" value="TRANSMEMBRANE PROTEIN 144"/>
    <property type="match status" value="1"/>
</dbReference>
<dbReference type="Pfam" id="PF07857">
    <property type="entry name" value="TMEM144"/>
    <property type="match status" value="1"/>
</dbReference>
<dbReference type="SUPFAM" id="SSF103481">
    <property type="entry name" value="Multidrug resistance efflux transporter EmrE"/>
    <property type="match status" value="1"/>
</dbReference>
<sequence length="348" mass="37771">MSSNATDLTTGYLSSAAAILLFGSNFVPLKKYDTGDGMFLQWVLCAAIWLVALVVNLILHCPKFWPFAMLGGCIWATGNIAVVPIIKTIGLGLGILIWGSFNTLTGWASSRFGWFGMDAEEVSKPMLNYVGAGLSVVSALTFLFIKSEIPNNPGSSDTTPLMTEPVINRTEDRSADSSWVDRLSTTYHRIVGCSLAVISGILYGSTFVPIIYIKDHSRRNDSMYAGASQYDLDYVFAHSSGIFLTSTVYFVAYCVAMKNRPKLYPEAVLPGLLSGVLWAIATCCWFIANHSLSAVISFPIITAGPGLIAALWGILIFKEIQGLRNYLLMMLAFCIILAGALCTAFSKV</sequence>
<accession>Q8VEH0</accession>
<accession>Q9CYC7</accession>
<organism>
    <name type="scientific">Mus musculus</name>
    <name type="common">Mouse</name>
    <dbReference type="NCBI Taxonomy" id="10090"/>
    <lineage>
        <taxon>Eukaryota</taxon>
        <taxon>Metazoa</taxon>
        <taxon>Chordata</taxon>
        <taxon>Craniata</taxon>
        <taxon>Vertebrata</taxon>
        <taxon>Euteleostomi</taxon>
        <taxon>Mammalia</taxon>
        <taxon>Eutheria</taxon>
        <taxon>Euarchontoglires</taxon>
        <taxon>Glires</taxon>
        <taxon>Rodentia</taxon>
        <taxon>Myomorpha</taxon>
        <taxon>Muroidea</taxon>
        <taxon>Muridae</taxon>
        <taxon>Murinae</taxon>
        <taxon>Mus</taxon>
        <taxon>Mus</taxon>
    </lineage>
</organism>
<protein>
    <recommendedName>
        <fullName>Transmembrane protein 144</fullName>
    </recommendedName>
</protein>
<keyword id="KW-0472">Membrane</keyword>
<keyword id="KW-1185">Reference proteome</keyword>
<keyword id="KW-0812">Transmembrane</keyword>
<keyword id="KW-1133">Transmembrane helix</keyword>
<feature type="chain" id="PRO_0000288972" description="Transmembrane protein 144">
    <location>
        <begin position="1"/>
        <end position="348"/>
    </location>
</feature>
<feature type="transmembrane region" description="Helical" evidence="1">
    <location>
        <begin position="8"/>
        <end position="28"/>
    </location>
</feature>
<feature type="transmembrane region" description="Helical" evidence="1">
    <location>
        <begin position="39"/>
        <end position="59"/>
    </location>
</feature>
<feature type="transmembrane region" description="Helical" evidence="1">
    <location>
        <begin position="64"/>
        <end position="86"/>
    </location>
</feature>
<feature type="transmembrane region" description="Helical" evidence="1">
    <location>
        <begin position="93"/>
        <end position="115"/>
    </location>
</feature>
<feature type="transmembrane region" description="Helical" evidence="1">
    <location>
        <begin position="125"/>
        <end position="145"/>
    </location>
</feature>
<feature type="transmembrane region" description="Helical" evidence="1">
    <location>
        <begin position="193"/>
        <end position="213"/>
    </location>
</feature>
<feature type="transmembrane region" description="Helical" evidence="1">
    <location>
        <begin position="235"/>
        <end position="255"/>
    </location>
</feature>
<feature type="transmembrane region" description="Helical" evidence="1">
    <location>
        <begin position="267"/>
        <end position="287"/>
    </location>
</feature>
<feature type="transmembrane region" description="Helical" evidence="1">
    <location>
        <begin position="296"/>
        <end position="316"/>
    </location>
</feature>
<feature type="transmembrane region" description="Helical" evidence="1">
    <location>
        <begin position="326"/>
        <end position="346"/>
    </location>
</feature>
<feature type="sequence conflict" description="In Ref. 1; BAB30945." evidence="2" ref="1">
    <original>P</original>
    <variation>H</variation>
    <location>
        <position position="165"/>
    </location>
</feature>
<name>TM144_MOUSE</name>
<reference key="1">
    <citation type="journal article" date="2005" name="Science">
        <title>The transcriptional landscape of the mammalian genome.</title>
        <authorList>
            <person name="Carninci P."/>
            <person name="Kasukawa T."/>
            <person name="Katayama S."/>
            <person name="Gough J."/>
            <person name="Frith M.C."/>
            <person name="Maeda N."/>
            <person name="Oyama R."/>
            <person name="Ravasi T."/>
            <person name="Lenhard B."/>
            <person name="Wells C."/>
            <person name="Kodzius R."/>
            <person name="Shimokawa K."/>
            <person name="Bajic V.B."/>
            <person name="Brenner S.E."/>
            <person name="Batalov S."/>
            <person name="Forrest A.R."/>
            <person name="Zavolan M."/>
            <person name="Davis M.J."/>
            <person name="Wilming L.G."/>
            <person name="Aidinis V."/>
            <person name="Allen J.E."/>
            <person name="Ambesi-Impiombato A."/>
            <person name="Apweiler R."/>
            <person name="Aturaliya R.N."/>
            <person name="Bailey T.L."/>
            <person name="Bansal M."/>
            <person name="Baxter L."/>
            <person name="Beisel K.W."/>
            <person name="Bersano T."/>
            <person name="Bono H."/>
            <person name="Chalk A.M."/>
            <person name="Chiu K.P."/>
            <person name="Choudhary V."/>
            <person name="Christoffels A."/>
            <person name="Clutterbuck D.R."/>
            <person name="Crowe M.L."/>
            <person name="Dalla E."/>
            <person name="Dalrymple B.P."/>
            <person name="de Bono B."/>
            <person name="Della Gatta G."/>
            <person name="di Bernardo D."/>
            <person name="Down T."/>
            <person name="Engstrom P."/>
            <person name="Fagiolini M."/>
            <person name="Faulkner G."/>
            <person name="Fletcher C.F."/>
            <person name="Fukushima T."/>
            <person name="Furuno M."/>
            <person name="Futaki S."/>
            <person name="Gariboldi M."/>
            <person name="Georgii-Hemming P."/>
            <person name="Gingeras T.R."/>
            <person name="Gojobori T."/>
            <person name="Green R.E."/>
            <person name="Gustincich S."/>
            <person name="Harbers M."/>
            <person name="Hayashi Y."/>
            <person name="Hensch T.K."/>
            <person name="Hirokawa N."/>
            <person name="Hill D."/>
            <person name="Huminiecki L."/>
            <person name="Iacono M."/>
            <person name="Ikeo K."/>
            <person name="Iwama A."/>
            <person name="Ishikawa T."/>
            <person name="Jakt M."/>
            <person name="Kanapin A."/>
            <person name="Katoh M."/>
            <person name="Kawasawa Y."/>
            <person name="Kelso J."/>
            <person name="Kitamura H."/>
            <person name="Kitano H."/>
            <person name="Kollias G."/>
            <person name="Krishnan S.P."/>
            <person name="Kruger A."/>
            <person name="Kummerfeld S.K."/>
            <person name="Kurochkin I.V."/>
            <person name="Lareau L.F."/>
            <person name="Lazarevic D."/>
            <person name="Lipovich L."/>
            <person name="Liu J."/>
            <person name="Liuni S."/>
            <person name="McWilliam S."/>
            <person name="Madan Babu M."/>
            <person name="Madera M."/>
            <person name="Marchionni L."/>
            <person name="Matsuda H."/>
            <person name="Matsuzawa S."/>
            <person name="Miki H."/>
            <person name="Mignone F."/>
            <person name="Miyake S."/>
            <person name="Morris K."/>
            <person name="Mottagui-Tabar S."/>
            <person name="Mulder N."/>
            <person name="Nakano N."/>
            <person name="Nakauchi H."/>
            <person name="Ng P."/>
            <person name="Nilsson R."/>
            <person name="Nishiguchi S."/>
            <person name="Nishikawa S."/>
            <person name="Nori F."/>
            <person name="Ohara O."/>
            <person name="Okazaki Y."/>
            <person name="Orlando V."/>
            <person name="Pang K.C."/>
            <person name="Pavan W.J."/>
            <person name="Pavesi G."/>
            <person name="Pesole G."/>
            <person name="Petrovsky N."/>
            <person name="Piazza S."/>
            <person name="Reed J."/>
            <person name="Reid J.F."/>
            <person name="Ring B.Z."/>
            <person name="Ringwald M."/>
            <person name="Rost B."/>
            <person name="Ruan Y."/>
            <person name="Salzberg S.L."/>
            <person name="Sandelin A."/>
            <person name="Schneider C."/>
            <person name="Schoenbach C."/>
            <person name="Sekiguchi K."/>
            <person name="Semple C.A."/>
            <person name="Seno S."/>
            <person name="Sessa L."/>
            <person name="Sheng Y."/>
            <person name="Shibata Y."/>
            <person name="Shimada H."/>
            <person name="Shimada K."/>
            <person name="Silva D."/>
            <person name="Sinclair B."/>
            <person name="Sperling S."/>
            <person name="Stupka E."/>
            <person name="Sugiura K."/>
            <person name="Sultana R."/>
            <person name="Takenaka Y."/>
            <person name="Taki K."/>
            <person name="Tammoja K."/>
            <person name="Tan S.L."/>
            <person name="Tang S."/>
            <person name="Taylor M.S."/>
            <person name="Tegner J."/>
            <person name="Teichmann S.A."/>
            <person name="Ueda H.R."/>
            <person name="van Nimwegen E."/>
            <person name="Verardo R."/>
            <person name="Wei C.L."/>
            <person name="Yagi K."/>
            <person name="Yamanishi H."/>
            <person name="Zabarovsky E."/>
            <person name="Zhu S."/>
            <person name="Zimmer A."/>
            <person name="Hide W."/>
            <person name="Bult C."/>
            <person name="Grimmond S.M."/>
            <person name="Teasdale R.D."/>
            <person name="Liu E.T."/>
            <person name="Brusic V."/>
            <person name="Quackenbush J."/>
            <person name="Wahlestedt C."/>
            <person name="Mattick J.S."/>
            <person name="Hume D.A."/>
            <person name="Kai C."/>
            <person name="Sasaki D."/>
            <person name="Tomaru Y."/>
            <person name="Fukuda S."/>
            <person name="Kanamori-Katayama M."/>
            <person name="Suzuki M."/>
            <person name="Aoki J."/>
            <person name="Arakawa T."/>
            <person name="Iida J."/>
            <person name="Imamura K."/>
            <person name="Itoh M."/>
            <person name="Kato T."/>
            <person name="Kawaji H."/>
            <person name="Kawagashira N."/>
            <person name="Kawashima T."/>
            <person name="Kojima M."/>
            <person name="Kondo S."/>
            <person name="Konno H."/>
            <person name="Nakano K."/>
            <person name="Ninomiya N."/>
            <person name="Nishio T."/>
            <person name="Okada M."/>
            <person name="Plessy C."/>
            <person name="Shibata K."/>
            <person name="Shiraki T."/>
            <person name="Suzuki S."/>
            <person name="Tagami M."/>
            <person name="Waki K."/>
            <person name="Watahiki A."/>
            <person name="Okamura-Oho Y."/>
            <person name="Suzuki H."/>
            <person name="Kawai J."/>
            <person name="Hayashizaki Y."/>
        </authorList>
    </citation>
    <scope>NUCLEOTIDE SEQUENCE [LARGE SCALE MRNA]</scope>
    <source>
        <strain>C57BL/6J</strain>
        <tissue>Cerebellum</tissue>
        <tissue>Embryo</tissue>
    </source>
</reference>
<reference key="2">
    <citation type="journal article" date="2004" name="Genome Res.">
        <title>The status, quality, and expansion of the NIH full-length cDNA project: the Mammalian Gene Collection (MGC).</title>
        <authorList>
            <consortium name="The MGC Project Team"/>
        </authorList>
    </citation>
    <scope>NUCLEOTIDE SEQUENCE [LARGE SCALE MRNA]</scope>
    <source>
        <strain>FVB/N</strain>
        <tissue>Mammary tumor</tissue>
    </source>
</reference>
<comment type="subcellular location">
    <subcellularLocation>
        <location evidence="2">Membrane</location>
        <topology evidence="2">Multi-pass membrane protein</topology>
    </subcellularLocation>
</comment>
<comment type="similarity">
    <text evidence="2">Belongs to the TMEM144 family.</text>
</comment>
<proteinExistence type="evidence at transcript level"/>
<gene>
    <name type="primary">Tmem144</name>
</gene>
<evidence type="ECO:0000255" key="1"/>
<evidence type="ECO:0000305" key="2"/>